<feature type="chain" id="PRO_0000282246" description="UPF0060 membrane protein PFL_4337">
    <location>
        <begin position="1"/>
        <end position="110"/>
    </location>
</feature>
<feature type="transmembrane region" description="Helical" evidence="1">
    <location>
        <begin position="5"/>
        <end position="25"/>
    </location>
</feature>
<feature type="transmembrane region" description="Helical" evidence="1">
    <location>
        <begin position="31"/>
        <end position="51"/>
    </location>
</feature>
<feature type="transmembrane region" description="Helical" evidence="1">
    <location>
        <begin position="59"/>
        <end position="79"/>
    </location>
</feature>
<feature type="transmembrane region" description="Helical" evidence="1">
    <location>
        <begin position="84"/>
        <end position="104"/>
    </location>
</feature>
<keyword id="KW-0997">Cell inner membrane</keyword>
<keyword id="KW-1003">Cell membrane</keyword>
<keyword id="KW-0472">Membrane</keyword>
<keyword id="KW-0812">Transmembrane</keyword>
<keyword id="KW-1133">Transmembrane helix</keyword>
<gene>
    <name type="ordered locus">PFL_4337</name>
</gene>
<name>Y4337_PSEF5</name>
<protein>
    <recommendedName>
        <fullName evidence="1">UPF0060 membrane protein PFL_4337</fullName>
    </recommendedName>
</protein>
<organism>
    <name type="scientific">Pseudomonas fluorescens (strain ATCC BAA-477 / NRRL B-23932 / Pf-5)</name>
    <dbReference type="NCBI Taxonomy" id="220664"/>
    <lineage>
        <taxon>Bacteria</taxon>
        <taxon>Pseudomonadati</taxon>
        <taxon>Pseudomonadota</taxon>
        <taxon>Gammaproteobacteria</taxon>
        <taxon>Pseudomonadales</taxon>
        <taxon>Pseudomonadaceae</taxon>
        <taxon>Pseudomonas</taxon>
    </lineage>
</organism>
<evidence type="ECO:0000255" key="1">
    <source>
        <dbReference type="HAMAP-Rule" id="MF_00010"/>
    </source>
</evidence>
<reference key="1">
    <citation type="journal article" date="2005" name="Nat. Biotechnol.">
        <title>Complete genome sequence of the plant commensal Pseudomonas fluorescens Pf-5.</title>
        <authorList>
            <person name="Paulsen I.T."/>
            <person name="Press C.M."/>
            <person name="Ravel J."/>
            <person name="Kobayashi D.Y."/>
            <person name="Myers G.S.A."/>
            <person name="Mavrodi D.V."/>
            <person name="DeBoy R.T."/>
            <person name="Seshadri R."/>
            <person name="Ren Q."/>
            <person name="Madupu R."/>
            <person name="Dodson R.J."/>
            <person name="Durkin A.S."/>
            <person name="Brinkac L.M."/>
            <person name="Daugherty S.C."/>
            <person name="Sullivan S.A."/>
            <person name="Rosovitz M.J."/>
            <person name="Gwinn M.L."/>
            <person name="Zhou L."/>
            <person name="Schneider D.J."/>
            <person name="Cartinhour S.W."/>
            <person name="Nelson W.C."/>
            <person name="Weidman J."/>
            <person name="Watkins K."/>
            <person name="Tran K."/>
            <person name="Khouri H."/>
            <person name="Pierson E.A."/>
            <person name="Pierson L.S. III"/>
            <person name="Thomashow L.S."/>
            <person name="Loper J.E."/>
        </authorList>
    </citation>
    <scope>NUCLEOTIDE SEQUENCE [LARGE SCALE GENOMIC DNA]</scope>
    <source>
        <strain>ATCC BAA-477 / NRRL B-23932 / Pf-5</strain>
    </source>
</reference>
<dbReference type="EMBL" id="CP000076">
    <property type="protein sequence ID" value="AAY93592.1"/>
    <property type="molecule type" value="Genomic_DNA"/>
</dbReference>
<dbReference type="RefSeq" id="WP_011062607.1">
    <property type="nucleotide sequence ID" value="NC_004129.6"/>
</dbReference>
<dbReference type="SMR" id="Q4K8K4"/>
<dbReference type="STRING" id="220664.PFL_4337"/>
<dbReference type="KEGG" id="pfl:PFL_4337"/>
<dbReference type="PATRIC" id="fig|220664.5.peg.4442"/>
<dbReference type="eggNOG" id="COG1742">
    <property type="taxonomic scope" value="Bacteria"/>
</dbReference>
<dbReference type="HOGENOM" id="CLU_117653_2_0_6"/>
<dbReference type="Proteomes" id="UP000008540">
    <property type="component" value="Chromosome"/>
</dbReference>
<dbReference type="GO" id="GO:0005886">
    <property type="term" value="C:plasma membrane"/>
    <property type="evidence" value="ECO:0007669"/>
    <property type="project" value="UniProtKB-SubCell"/>
</dbReference>
<dbReference type="HAMAP" id="MF_00010">
    <property type="entry name" value="UPF0060"/>
    <property type="match status" value="1"/>
</dbReference>
<dbReference type="InterPro" id="IPR003844">
    <property type="entry name" value="UPF0060"/>
</dbReference>
<dbReference type="NCBIfam" id="NF002586">
    <property type="entry name" value="PRK02237.1"/>
    <property type="match status" value="1"/>
</dbReference>
<dbReference type="PANTHER" id="PTHR36116">
    <property type="entry name" value="UPF0060 MEMBRANE PROTEIN YNFA"/>
    <property type="match status" value="1"/>
</dbReference>
<dbReference type="PANTHER" id="PTHR36116:SF1">
    <property type="entry name" value="UPF0060 MEMBRANE PROTEIN YNFA"/>
    <property type="match status" value="1"/>
</dbReference>
<dbReference type="Pfam" id="PF02694">
    <property type="entry name" value="UPF0060"/>
    <property type="match status" value="1"/>
</dbReference>
<dbReference type="SUPFAM" id="SSF103481">
    <property type="entry name" value="Multidrug resistance efflux transporter EmrE"/>
    <property type="match status" value="1"/>
</dbReference>
<proteinExistence type="inferred from homology"/>
<comment type="subcellular location">
    <subcellularLocation>
        <location evidence="1">Cell inner membrane</location>
        <topology evidence="1">Multi-pass membrane protein</topology>
    </subcellularLocation>
</comment>
<comment type="similarity">
    <text evidence="1">Belongs to the UPF0060 family.</text>
</comment>
<accession>Q4K8K4</accession>
<sequence length="110" mass="12112">MLNYLWFFLAALFEIAGCYAFWMWLRQGKSALWVIPALVSLTLFALLLTKVEATYAGRAYAAYGGIYIVASIGWLAVVERVRPLGSDWLGLALCVIGASVILFGPRFSNG</sequence>